<name>NANE_LATSS</name>
<accession>Q38V36</accession>
<evidence type="ECO:0000255" key="1">
    <source>
        <dbReference type="HAMAP-Rule" id="MF_01235"/>
    </source>
</evidence>
<feature type="chain" id="PRO_0000301474" description="Putative N-acetylmannosamine-6-phosphate 2-epimerase">
    <location>
        <begin position="1"/>
        <end position="231"/>
    </location>
</feature>
<gene>
    <name evidence="1" type="primary">nanE</name>
    <name type="ordered locus">LCA_1641</name>
</gene>
<reference key="1">
    <citation type="journal article" date="2005" name="Nat. Biotechnol.">
        <title>The complete genome sequence of the meat-borne lactic acid bacterium Lactobacillus sakei 23K.</title>
        <authorList>
            <person name="Chaillou S."/>
            <person name="Champomier-Verges M.-C."/>
            <person name="Cornet M."/>
            <person name="Crutz-Le Coq A.-M."/>
            <person name="Dudez A.-M."/>
            <person name="Martin V."/>
            <person name="Beaufils S."/>
            <person name="Darbon-Rongere E."/>
            <person name="Bossy R."/>
            <person name="Loux V."/>
            <person name="Zagorec M."/>
        </authorList>
    </citation>
    <scope>NUCLEOTIDE SEQUENCE [LARGE SCALE GENOMIC DNA]</scope>
    <source>
        <strain>23K</strain>
    </source>
</reference>
<keyword id="KW-0119">Carbohydrate metabolism</keyword>
<keyword id="KW-0413">Isomerase</keyword>
<keyword id="KW-1185">Reference proteome</keyword>
<protein>
    <recommendedName>
        <fullName evidence="1">Putative N-acetylmannosamine-6-phosphate 2-epimerase</fullName>
        <ecNumber evidence="1">5.1.3.9</ecNumber>
    </recommendedName>
    <alternativeName>
        <fullName evidence="1">ManNAc-6-P epimerase</fullName>
    </alternativeName>
</protein>
<sequence length="231" mass="24870">MKNNFLDKVKDRLIISCQALADEPLHSSFIMARMARAAYEAGASAIRANSVVDVQAIMDTVELPVIGLDKVDYSDAPIYITPTIKEMRGIAATGAAVVACDVTGRPRPHGEQLATIVETMRTEYPDTLLMADTASLDDVKEANRLGFDIIGTTMYGYTPATEGCNIADNDFEYLKQVLAMSKAPVIAEGKIDSPEKAVTALKLGCHSVVVGSSITRPQLIAKTYIDAVNEL</sequence>
<proteinExistence type="inferred from homology"/>
<organism>
    <name type="scientific">Latilactobacillus sakei subsp. sakei (strain 23K)</name>
    <name type="common">Lactobacillus sakei subsp. sakei</name>
    <dbReference type="NCBI Taxonomy" id="314315"/>
    <lineage>
        <taxon>Bacteria</taxon>
        <taxon>Bacillati</taxon>
        <taxon>Bacillota</taxon>
        <taxon>Bacilli</taxon>
        <taxon>Lactobacillales</taxon>
        <taxon>Lactobacillaceae</taxon>
        <taxon>Latilactobacillus</taxon>
    </lineage>
</organism>
<dbReference type="EC" id="5.1.3.9" evidence="1"/>
<dbReference type="EMBL" id="CR936503">
    <property type="protein sequence ID" value="CAI55948.1"/>
    <property type="molecule type" value="Genomic_DNA"/>
</dbReference>
<dbReference type="RefSeq" id="WP_011375333.1">
    <property type="nucleotide sequence ID" value="NC_007576.1"/>
</dbReference>
<dbReference type="SMR" id="Q38V36"/>
<dbReference type="STRING" id="314315.LCA_1641"/>
<dbReference type="KEGG" id="lsa:LCA_1641"/>
<dbReference type="eggNOG" id="COG3010">
    <property type="taxonomic scope" value="Bacteria"/>
</dbReference>
<dbReference type="HOGENOM" id="CLU_086300_1_0_9"/>
<dbReference type="OrthoDB" id="9781704at2"/>
<dbReference type="UniPathway" id="UPA00629">
    <property type="reaction ID" value="UER00682"/>
</dbReference>
<dbReference type="Proteomes" id="UP000002707">
    <property type="component" value="Chromosome"/>
</dbReference>
<dbReference type="GO" id="GO:0005829">
    <property type="term" value="C:cytosol"/>
    <property type="evidence" value="ECO:0007669"/>
    <property type="project" value="TreeGrafter"/>
</dbReference>
<dbReference type="GO" id="GO:0047465">
    <property type="term" value="F:N-acylglucosamine-6-phosphate 2-epimerase activity"/>
    <property type="evidence" value="ECO:0007669"/>
    <property type="project" value="UniProtKB-EC"/>
</dbReference>
<dbReference type="GO" id="GO:0005975">
    <property type="term" value="P:carbohydrate metabolic process"/>
    <property type="evidence" value="ECO:0007669"/>
    <property type="project" value="UniProtKB-UniRule"/>
</dbReference>
<dbReference type="GO" id="GO:0006053">
    <property type="term" value="P:N-acetylmannosamine catabolic process"/>
    <property type="evidence" value="ECO:0007669"/>
    <property type="project" value="TreeGrafter"/>
</dbReference>
<dbReference type="GO" id="GO:0019262">
    <property type="term" value="P:N-acetylneuraminate catabolic process"/>
    <property type="evidence" value="ECO:0007669"/>
    <property type="project" value="UniProtKB-UniRule"/>
</dbReference>
<dbReference type="CDD" id="cd04729">
    <property type="entry name" value="NanE"/>
    <property type="match status" value="1"/>
</dbReference>
<dbReference type="Gene3D" id="3.20.20.70">
    <property type="entry name" value="Aldolase class I"/>
    <property type="match status" value="1"/>
</dbReference>
<dbReference type="HAMAP" id="MF_01235">
    <property type="entry name" value="ManNAc6P_epimer"/>
    <property type="match status" value="1"/>
</dbReference>
<dbReference type="InterPro" id="IPR013785">
    <property type="entry name" value="Aldolase_TIM"/>
</dbReference>
<dbReference type="InterPro" id="IPR007260">
    <property type="entry name" value="NanE"/>
</dbReference>
<dbReference type="InterPro" id="IPR011060">
    <property type="entry name" value="RibuloseP-bd_barrel"/>
</dbReference>
<dbReference type="NCBIfam" id="NF002231">
    <property type="entry name" value="PRK01130.1"/>
    <property type="match status" value="1"/>
</dbReference>
<dbReference type="PANTHER" id="PTHR36204">
    <property type="entry name" value="N-ACETYLMANNOSAMINE-6-PHOSPHATE 2-EPIMERASE-RELATED"/>
    <property type="match status" value="1"/>
</dbReference>
<dbReference type="PANTHER" id="PTHR36204:SF1">
    <property type="entry name" value="N-ACETYLMANNOSAMINE-6-PHOSPHATE 2-EPIMERASE-RELATED"/>
    <property type="match status" value="1"/>
</dbReference>
<dbReference type="Pfam" id="PF04131">
    <property type="entry name" value="NanE"/>
    <property type="match status" value="1"/>
</dbReference>
<dbReference type="SUPFAM" id="SSF51366">
    <property type="entry name" value="Ribulose-phoshate binding barrel"/>
    <property type="match status" value="1"/>
</dbReference>
<comment type="function">
    <text evidence="1">Converts N-acetylmannosamine-6-phosphate (ManNAc-6-P) to N-acetylglucosamine-6-phosphate (GlcNAc-6-P).</text>
</comment>
<comment type="catalytic activity">
    <reaction evidence="1">
        <text>an N-acyl-D-glucosamine 6-phosphate = an N-acyl-D-mannosamine 6-phosphate</text>
        <dbReference type="Rhea" id="RHEA:23932"/>
        <dbReference type="ChEBI" id="CHEBI:57599"/>
        <dbReference type="ChEBI" id="CHEBI:57666"/>
        <dbReference type="EC" id="5.1.3.9"/>
    </reaction>
</comment>
<comment type="pathway">
    <text evidence="1">Amino-sugar metabolism; N-acetylneuraminate degradation; D-fructose 6-phosphate from N-acetylneuraminate: step 3/5.</text>
</comment>
<comment type="similarity">
    <text evidence="1">Belongs to the NanE family.</text>
</comment>